<feature type="signal peptide" evidence="2">
    <location>
        <begin position="1"/>
        <end position="28"/>
    </location>
</feature>
<feature type="chain" id="PRO_0000036735" description="Protein MGF 110-5L">
    <location>
        <begin position="29"/>
        <end position="82"/>
    </location>
</feature>
<feature type="glycosylation site" description="N-linked (GlcNAc...) asparagine; by host" evidence="3">
    <location>
        <position position="62"/>
    </location>
</feature>
<gene>
    <name type="ordered locus">BA71V-013</name>
    <name type="ordered locus">BA71V-014</name>
    <name type="ORF">V82L</name>
    <name type="ORF">X'82</name>
</gene>
<organismHost>
    <name type="scientific">Ornithodoros</name>
    <name type="common">relapsing fever ticks</name>
    <dbReference type="NCBI Taxonomy" id="6937"/>
</organismHost>
<organismHost>
    <name type="scientific">Sus scrofa</name>
    <name type="common">Pig</name>
    <dbReference type="NCBI Taxonomy" id="9823"/>
</organismHost>
<comment type="function">
    <text evidence="1">Plays a role in virus cell tropism, and may be required for efficient virus replication in macrophages.</text>
</comment>
<comment type="induction">
    <text evidence="4">Expressed in the early phase of the viral replicative cycle.</text>
</comment>
<comment type="similarity">
    <text evidence="5">Belongs to the asfivirus MGF 110 family.</text>
</comment>
<sequence>MLVIFLGILGLLANQVSSQLVGQLHPTENPSENELEYWCTYMECCQFCWDCQNGLCVNKLGNTTILENEYVHPCIVSRWLNK</sequence>
<dbReference type="EMBL" id="M36467">
    <property type="protein sequence ID" value="AAA42685.1"/>
    <property type="molecule type" value="Genomic_DNA"/>
</dbReference>
<dbReference type="EMBL" id="U18466">
    <property type="protein sequence ID" value="AAA65246.1"/>
    <property type="molecule type" value="Genomic_DNA"/>
</dbReference>
<dbReference type="PIR" id="B43702">
    <property type="entry name" value="B43702"/>
</dbReference>
<dbReference type="RefSeq" id="NP_042710.1">
    <property type="nucleotide sequence ID" value="NC_001659.2"/>
</dbReference>
<dbReference type="GeneID" id="22220400"/>
<dbReference type="KEGG" id="vg:22220400"/>
<dbReference type="Proteomes" id="UP000000624">
    <property type="component" value="Segment"/>
</dbReference>
<dbReference type="InterPro" id="IPR004848">
    <property type="entry name" value="ASFV_fam_110"/>
</dbReference>
<dbReference type="Pfam" id="PF01639">
    <property type="entry name" value="v110"/>
    <property type="match status" value="1"/>
</dbReference>
<name>1105L_ASFB7</name>
<keyword id="KW-0244">Early protein</keyword>
<keyword id="KW-0325">Glycoprotein</keyword>
<keyword id="KW-1185">Reference proteome</keyword>
<keyword id="KW-0732">Signal</keyword>
<protein>
    <recommendedName>
        <fullName>Protein MGF 110-5L</fullName>
    </recommendedName>
</protein>
<proteinExistence type="evidence at transcript level"/>
<accession>P18557</accession>
<organism>
    <name type="scientific">African swine fever virus (strain Badajoz 1971 Vero-adapted)</name>
    <name type="common">Ba71V</name>
    <name type="synonym">ASFV</name>
    <dbReference type="NCBI Taxonomy" id="10498"/>
    <lineage>
        <taxon>Viruses</taxon>
        <taxon>Varidnaviria</taxon>
        <taxon>Bamfordvirae</taxon>
        <taxon>Nucleocytoviricota</taxon>
        <taxon>Pokkesviricetes</taxon>
        <taxon>Asfuvirales</taxon>
        <taxon>Asfarviridae</taxon>
        <taxon>Asfivirus</taxon>
        <taxon>African swine fever virus</taxon>
    </lineage>
</organism>
<evidence type="ECO:0000250" key="1"/>
<evidence type="ECO:0000250" key="2">
    <source>
        <dbReference type="UniProtKB" id="A9JLI7"/>
    </source>
</evidence>
<evidence type="ECO:0000255" key="3"/>
<evidence type="ECO:0000269" key="4">
    <source>
    </source>
</evidence>
<evidence type="ECO:0000305" key="5"/>
<reference key="1">
    <citation type="journal article" date="1990" name="J. Virol.">
        <title>Multigene families in African swine fever virus: family 110.</title>
        <authorList>
            <person name="Almendral J.M."/>
            <person name="Almazan F."/>
            <person name="Blasco R."/>
            <person name="Vinuela E."/>
        </authorList>
    </citation>
    <scope>NUCLEOTIDE SEQUENCE [GENOMIC DNA]</scope>
</reference>
<reference key="2">
    <citation type="journal article" date="2020" name="J. Virol.">
        <title>The African Swine Fever Virus Transcriptome.</title>
        <authorList>
            <person name="Cackett G."/>
            <person name="Matelska D."/>
            <person name="Sykora M."/>
            <person name="Portugal R."/>
            <person name="Malecki M."/>
            <person name="Baehler J."/>
            <person name="Dixon L."/>
            <person name="Werner F."/>
        </authorList>
    </citation>
    <scope>INDUCTION</scope>
</reference>